<proteinExistence type="inferred from homology"/>
<comment type="function">
    <text evidence="1">An essential GTPase that binds both GDP and GTP, with rapid nucleotide exchange. Plays a role in 16S rRNA processing and 30S ribosomal subunit biogenesis and possibly also in cell cycle regulation and energy metabolism.</text>
</comment>
<comment type="subunit">
    <text evidence="1">Monomer.</text>
</comment>
<comment type="subcellular location">
    <subcellularLocation>
        <location>Cytoplasm</location>
    </subcellularLocation>
    <subcellularLocation>
        <location evidence="1">Cell inner membrane</location>
        <topology evidence="1">Peripheral membrane protein</topology>
    </subcellularLocation>
</comment>
<comment type="similarity">
    <text evidence="1 2">Belongs to the TRAFAC class TrmE-Era-EngA-EngB-Septin-like GTPase superfamily. Era GTPase family.</text>
</comment>
<name>ERA_BORA1</name>
<reference key="1">
    <citation type="journal article" date="2006" name="J. Bacteriol.">
        <title>Comparison of the genome sequence of the poultry pathogen Bordetella avium with those of B. bronchiseptica, B. pertussis, and B. parapertussis reveals extensive diversity in surface structures associated with host interaction.</title>
        <authorList>
            <person name="Sebaihia M."/>
            <person name="Preston A."/>
            <person name="Maskell D.J."/>
            <person name="Kuzmiak H."/>
            <person name="Connell T.D."/>
            <person name="King N.D."/>
            <person name="Orndorff P.E."/>
            <person name="Miyamoto D.M."/>
            <person name="Thomson N.R."/>
            <person name="Harris D."/>
            <person name="Goble A."/>
            <person name="Lord A."/>
            <person name="Murphy L."/>
            <person name="Quail M.A."/>
            <person name="Rutter S."/>
            <person name="Squares R."/>
            <person name="Squares S."/>
            <person name="Woodward J."/>
            <person name="Parkhill J."/>
            <person name="Temple L.M."/>
        </authorList>
    </citation>
    <scope>NUCLEOTIDE SEQUENCE [LARGE SCALE GENOMIC DNA]</scope>
    <source>
        <strain>197N</strain>
    </source>
</reference>
<protein>
    <recommendedName>
        <fullName evidence="1">GTPase Era</fullName>
    </recommendedName>
</protein>
<feature type="chain" id="PRO_1000121299" description="GTPase Era">
    <location>
        <begin position="1"/>
        <end position="296"/>
    </location>
</feature>
<feature type="domain" description="Era-type G" evidence="2">
    <location>
        <begin position="7"/>
        <end position="174"/>
    </location>
</feature>
<feature type="domain" description="KH type-2" evidence="1">
    <location>
        <begin position="197"/>
        <end position="281"/>
    </location>
</feature>
<feature type="region of interest" description="G1" evidence="2">
    <location>
        <begin position="15"/>
        <end position="22"/>
    </location>
</feature>
<feature type="region of interest" description="G2" evidence="2">
    <location>
        <begin position="41"/>
        <end position="45"/>
    </location>
</feature>
<feature type="region of interest" description="G3" evidence="2">
    <location>
        <begin position="62"/>
        <end position="65"/>
    </location>
</feature>
<feature type="region of interest" description="G4" evidence="2">
    <location>
        <begin position="123"/>
        <end position="126"/>
    </location>
</feature>
<feature type="region of interest" description="G5" evidence="2">
    <location>
        <begin position="153"/>
        <end position="155"/>
    </location>
</feature>
<feature type="binding site" evidence="1">
    <location>
        <begin position="15"/>
        <end position="22"/>
    </location>
    <ligand>
        <name>GTP</name>
        <dbReference type="ChEBI" id="CHEBI:37565"/>
    </ligand>
</feature>
<feature type="binding site" evidence="1">
    <location>
        <begin position="62"/>
        <end position="66"/>
    </location>
    <ligand>
        <name>GTP</name>
        <dbReference type="ChEBI" id="CHEBI:37565"/>
    </ligand>
</feature>
<feature type="binding site" evidence="1">
    <location>
        <begin position="123"/>
        <end position="126"/>
    </location>
    <ligand>
        <name>GTP</name>
        <dbReference type="ChEBI" id="CHEBI:37565"/>
    </ligand>
</feature>
<sequence length="296" mass="33058">MSSQAFRTGFVAIVGRPNVGKSTLTNALIGSKISIVSRKAQTTRHRIHGVLTREHEQFVFVDTPGFQTRHGGAMNRMMNRVVTQALADVDVVVHVVEAGKWSEGDAKLLPLLPKAERTILAISKIDALKSRDELFPFVAKIMAQHAYGAVVPVSATKNHQLDQLLEEIAQRLPEGEPMFEEDTLTDRSMRFIAAELVREKIFRLVGDELPYGCTVVIEQWEETDAHARIAACVVVERDSHRPILLGAGGQHMKRIATEARQDIAKLLDKPVHLEVYIKVRKGWSDREGALRDLGYE</sequence>
<gene>
    <name evidence="1" type="primary">era</name>
    <name type="ordered locus">BAV1132</name>
</gene>
<keyword id="KW-0997">Cell inner membrane</keyword>
<keyword id="KW-1003">Cell membrane</keyword>
<keyword id="KW-0963">Cytoplasm</keyword>
<keyword id="KW-0342">GTP-binding</keyword>
<keyword id="KW-0472">Membrane</keyword>
<keyword id="KW-0547">Nucleotide-binding</keyword>
<keyword id="KW-1185">Reference proteome</keyword>
<keyword id="KW-0690">Ribosome biogenesis</keyword>
<keyword id="KW-0694">RNA-binding</keyword>
<keyword id="KW-0699">rRNA-binding</keyword>
<organism>
    <name type="scientific">Bordetella avium (strain 197N)</name>
    <dbReference type="NCBI Taxonomy" id="360910"/>
    <lineage>
        <taxon>Bacteria</taxon>
        <taxon>Pseudomonadati</taxon>
        <taxon>Pseudomonadota</taxon>
        <taxon>Betaproteobacteria</taxon>
        <taxon>Burkholderiales</taxon>
        <taxon>Alcaligenaceae</taxon>
        <taxon>Bordetella</taxon>
    </lineage>
</organism>
<evidence type="ECO:0000255" key="1">
    <source>
        <dbReference type="HAMAP-Rule" id="MF_00367"/>
    </source>
</evidence>
<evidence type="ECO:0000255" key="2">
    <source>
        <dbReference type="PROSITE-ProRule" id="PRU01050"/>
    </source>
</evidence>
<dbReference type="EMBL" id="AM167904">
    <property type="protein sequence ID" value="CAJ48741.1"/>
    <property type="molecule type" value="Genomic_DNA"/>
</dbReference>
<dbReference type="RefSeq" id="WP_012416815.1">
    <property type="nucleotide sequence ID" value="NC_010645.1"/>
</dbReference>
<dbReference type="SMR" id="Q2KWX8"/>
<dbReference type="STRING" id="360910.BAV1132"/>
<dbReference type="GeneID" id="92935675"/>
<dbReference type="KEGG" id="bav:BAV1132"/>
<dbReference type="eggNOG" id="COG1159">
    <property type="taxonomic scope" value="Bacteria"/>
</dbReference>
<dbReference type="HOGENOM" id="CLU_038009_1_2_4"/>
<dbReference type="OrthoDB" id="9805918at2"/>
<dbReference type="Proteomes" id="UP000001977">
    <property type="component" value="Chromosome"/>
</dbReference>
<dbReference type="GO" id="GO:0005829">
    <property type="term" value="C:cytosol"/>
    <property type="evidence" value="ECO:0007669"/>
    <property type="project" value="TreeGrafter"/>
</dbReference>
<dbReference type="GO" id="GO:0005886">
    <property type="term" value="C:plasma membrane"/>
    <property type="evidence" value="ECO:0007669"/>
    <property type="project" value="UniProtKB-SubCell"/>
</dbReference>
<dbReference type="GO" id="GO:0005525">
    <property type="term" value="F:GTP binding"/>
    <property type="evidence" value="ECO:0007669"/>
    <property type="project" value="UniProtKB-UniRule"/>
</dbReference>
<dbReference type="GO" id="GO:0003924">
    <property type="term" value="F:GTPase activity"/>
    <property type="evidence" value="ECO:0007669"/>
    <property type="project" value="UniProtKB-UniRule"/>
</dbReference>
<dbReference type="GO" id="GO:0043024">
    <property type="term" value="F:ribosomal small subunit binding"/>
    <property type="evidence" value="ECO:0007669"/>
    <property type="project" value="TreeGrafter"/>
</dbReference>
<dbReference type="GO" id="GO:0070181">
    <property type="term" value="F:small ribosomal subunit rRNA binding"/>
    <property type="evidence" value="ECO:0007669"/>
    <property type="project" value="UniProtKB-UniRule"/>
</dbReference>
<dbReference type="GO" id="GO:0000028">
    <property type="term" value="P:ribosomal small subunit assembly"/>
    <property type="evidence" value="ECO:0007669"/>
    <property type="project" value="TreeGrafter"/>
</dbReference>
<dbReference type="CDD" id="cd04163">
    <property type="entry name" value="Era"/>
    <property type="match status" value="1"/>
</dbReference>
<dbReference type="CDD" id="cd22534">
    <property type="entry name" value="KH-II_Era"/>
    <property type="match status" value="1"/>
</dbReference>
<dbReference type="Gene3D" id="3.30.300.20">
    <property type="match status" value="1"/>
</dbReference>
<dbReference type="Gene3D" id="3.40.50.300">
    <property type="entry name" value="P-loop containing nucleotide triphosphate hydrolases"/>
    <property type="match status" value="1"/>
</dbReference>
<dbReference type="HAMAP" id="MF_00367">
    <property type="entry name" value="GTPase_Era"/>
    <property type="match status" value="1"/>
</dbReference>
<dbReference type="InterPro" id="IPR030388">
    <property type="entry name" value="G_ERA_dom"/>
</dbReference>
<dbReference type="InterPro" id="IPR006073">
    <property type="entry name" value="GTP-bd"/>
</dbReference>
<dbReference type="InterPro" id="IPR005662">
    <property type="entry name" value="GTPase_Era-like"/>
</dbReference>
<dbReference type="InterPro" id="IPR015946">
    <property type="entry name" value="KH_dom-like_a/b"/>
</dbReference>
<dbReference type="InterPro" id="IPR004044">
    <property type="entry name" value="KH_dom_type_2"/>
</dbReference>
<dbReference type="InterPro" id="IPR009019">
    <property type="entry name" value="KH_sf_prok-type"/>
</dbReference>
<dbReference type="InterPro" id="IPR027417">
    <property type="entry name" value="P-loop_NTPase"/>
</dbReference>
<dbReference type="InterPro" id="IPR005225">
    <property type="entry name" value="Small_GTP-bd"/>
</dbReference>
<dbReference type="NCBIfam" id="TIGR00436">
    <property type="entry name" value="era"/>
    <property type="match status" value="1"/>
</dbReference>
<dbReference type="NCBIfam" id="NF000908">
    <property type="entry name" value="PRK00089.1"/>
    <property type="match status" value="1"/>
</dbReference>
<dbReference type="NCBIfam" id="TIGR00231">
    <property type="entry name" value="small_GTP"/>
    <property type="match status" value="1"/>
</dbReference>
<dbReference type="PANTHER" id="PTHR42698">
    <property type="entry name" value="GTPASE ERA"/>
    <property type="match status" value="1"/>
</dbReference>
<dbReference type="PANTHER" id="PTHR42698:SF1">
    <property type="entry name" value="GTPASE ERA, MITOCHONDRIAL"/>
    <property type="match status" value="1"/>
</dbReference>
<dbReference type="Pfam" id="PF07650">
    <property type="entry name" value="KH_2"/>
    <property type="match status" value="1"/>
</dbReference>
<dbReference type="Pfam" id="PF01926">
    <property type="entry name" value="MMR_HSR1"/>
    <property type="match status" value="1"/>
</dbReference>
<dbReference type="PRINTS" id="PR00326">
    <property type="entry name" value="GTP1OBG"/>
</dbReference>
<dbReference type="SUPFAM" id="SSF52540">
    <property type="entry name" value="P-loop containing nucleoside triphosphate hydrolases"/>
    <property type="match status" value="1"/>
</dbReference>
<dbReference type="SUPFAM" id="SSF54814">
    <property type="entry name" value="Prokaryotic type KH domain (KH-domain type II)"/>
    <property type="match status" value="1"/>
</dbReference>
<dbReference type="PROSITE" id="PS51713">
    <property type="entry name" value="G_ERA"/>
    <property type="match status" value="1"/>
</dbReference>
<accession>Q2KWX8</accession>